<organism>
    <name type="scientific">Chlorobium phaeobacteroides (strain DSM 266 / SMG 266 / 2430)</name>
    <dbReference type="NCBI Taxonomy" id="290317"/>
    <lineage>
        <taxon>Bacteria</taxon>
        <taxon>Pseudomonadati</taxon>
        <taxon>Chlorobiota</taxon>
        <taxon>Chlorobiia</taxon>
        <taxon>Chlorobiales</taxon>
        <taxon>Chlorobiaceae</taxon>
        <taxon>Chlorobium/Pelodictyon group</taxon>
        <taxon>Chlorobium</taxon>
    </lineage>
</organism>
<reference key="1">
    <citation type="submission" date="2006-12" db="EMBL/GenBank/DDBJ databases">
        <title>Complete sequence of Chlorobium phaeobacteroides DSM 266.</title>
        <authorList>
            <consortium name="US DOE Joint Genome Institute"/>
            <person name="Copeland A."/>
            <person name="Lucas S."/>
            <person name="Lapidus A."/>
            <person name="Barry K."/>
            <person name="Detter J.C."/>
            <person name="Glavina del Rio T."/>
            <person name="Hammon N."/>
            <person name="Israni S."/>
            <person name="Pitluck S."/>
            <person name="Goltsman E."/>
            <person name="Schmutz J."/>
            <person name="Larimer F."/>
            <person name="Land M."/>
            <person name="Hauser L."/>
            <person name="Mikhailova N."/>
            <person name="Li T."/>
            <person name="Overmann J."/>
            <person name="Bryant D.A."/>
            <person name="Richardson P."/>
        </authorList>
    </citation>
    <scope>NUCLEOTIDE SEQUENCE [LARGE SCALE GENOMIC DNA]</scope>
    <source>
        <strain>DSM 266 / SMG 266 / 2430</strain>
    </source>
</reference>
<feature type="chain" id="PRO_1000059535" description="Chaperone protein DnaK">
    <location>
        <begin position="1"/>
        <end position="640"/>
    </location>
</feature>
<feature type="region of interest" description="Disordered" evidence="2">
    <location>
        <begin position="547"/>
        <end position="575"/>
    </location>
</feature>
<feature type="region of interest" description="Disordered" evidence="2">
    <location>
        <begin position="595"/>
        <end position="640"/>
    </location>
</feature>
<feature type="compositionally biased region" description="Basic and acidic residues" evidence="2">
    <location>
        <begin position="547"/>
        <end position="569"/>
    </location>
</feature>
<feature type="compositionally biased region" description="Polar residues" evidence="2">
    <location>
        <begin position="603"/>
        <end position="615"/>
    </location>
</feature>
<feature type="compositionally biased region" description="Acidic residues" evidence="2">
    <location>
        <begin position="625"/>
        <end position="634"/>
    </location>
</feature>
<feature type="modified residue" description="Phosphothreonine; by autocatalysis" evidence="1">
    <location>
        <position position="196"/>
    </location>
</feature>
<gene>
    <name evidence="1" type="primary">dnaK</name>
    <name type="ordered locus">Cpha266_0864</name>
</gene>
<sequence>MGKIIGIDLGTTNSCVAVMQGTQPTVIENSEGNRTTPSMVAFTKSGDRLVGQAAKRQAITNPKNTIYSIKRFVGRKFDEVPNEKKLAPYDIVNEGGEARVKINDKAYSPQEISAMILQKMKQTAEDFLGEKVSEAVITVPAYFNDAQRQATKDAGRIAGLDVKRIINEPTAAALAYGLDKKQSSEKVAVFDLGGGTFDISILELGDGVFEVKSTDGDTHLGGDDFDQKIINFLADEFKKQEGIDLRNDAIALQRLKEAAEKAKVELSSRTDTEINLPFITATQEGPKHLVINLTRAKFEAMCSDLFDKILEPCHRAVKNSSVEIKDIDEVVLVGGSTRIPKVQALVKEFFGREPNKSVNPDEVVAVGAAIQGGVLKGDVTDVLLLDVSPLSLGIETLGGVMTRLIEANTTIPTRKQEVFSTAGDNQTSVEVHVLQGERPMASDNKTLGRFHLGDIPPAPRGLPQIEVTFDIDSNGILSVSAKDKATGKEQSIKIEASGKLSDAEIEKMKRDAKEHAAEDMKKKEEIDSKNAADGLIFSTEKQLAELGDKIPSDKRPALEGALEKLKDATKNGTTESIKNAMDELSKVWNDVSSNLYQAPGAETNASEPTQNTDGSGHTKKSGNDGEVENAEFEVIDGNGK</sequence>
<proteinExistence type="inferred from homology"/>
<name>DNAK_CHLPD</name>
<evidence type="ECO:0000255" key="1">
    <source>
        <dbReference type="HAMAP-Rule" id="MF_00332"/>
    </source>
</evidence>
<evidence type="ECO:0000256" key="2">
    <source>
        <dbReference type="SAM" id="MobiDB-lite"/>
    </source>
</evidence>
<keyword id="KW-0067">ATP-binding</keyword>
<keyword id="KW-0143">Chaperone</keyword>
<keyword id="KW-0547">Nucleotide-binding</keyword>
<keyword id="KW-0597">Phosphoprotein</keyword>
<keyword id="KW-1185">Reference proteome</keyword>
<keyword id="KW-0346">Stress response</keyword>
<protein>
    <recommendedName>
        <fullName evidence="1">Chaperone protein DnaK</fullName>
    </recommendedName>
    <alternativeName>
        <fullName evidence="1">HSP70</fullName>
    </alternativeName>
    <alternativeName>
        <fullName evidence="1">Heat shock 70 kDa protein</fullName>
    </alternativeName>
    <alternativeName>
        <fullName evidence="1">Heat shock protein 70</fullName>
    </alternativeName>
</protein>
<accession>A1BET8</accession>
<dbReference type="EMBL" id="CP000492">
    <property type="protein sequence ID" value="ABL64915.1"/>
    <property type="molecule type" value="Genomic_DNA"/>
</dbReference>
<dbReference type="RefSeq" id="WP_011744743.1">
    <property type="nucleotide sequence ID" value="NC_008639.1"/>
</dbReference>
<dbReference type="SMR" id="A1BET8"/>
<dbReference type="STRING" id="290317.Cpha266_0864"/>
<dbReference type="KEGG" id="cph:Cpha266_0864"/>
<dbReference type="eggNOG" id="COG0443">
    <property type="taxonomic scope" value="Bacteria"/>
</dbReference>
<dbReference type="HOGENOM" id="CLU_005965_2_4_10"/>
<dbReference type="OrthoDB" id="9766019at2"/>
<dbReference type="Proteomes" id="UP000008701">
    <property type="component" value="Chromosome"/>
</dbReference>
<dbReference type="GO" id="GO:0005524">
    <property type="term" value="F:ATP binding"/>
    <property type="evidence" value="ECO:0007669"/>
    <property type="project" value="UniProtKB-UniRule"/>
</dbReference>
<dbReference type="GO" id="GO:0140662">
    <property type="term" value="F:ATP-dependent protein folding chaperone"/>
    <property type="evidence" value="ECO:0007669"/>
    <property type="project" value="InterPro"/>
</dbReference>
<dbReference type="GO" id="GO:0051082">
    <property type="term" value="F:unfolded protein binding"/>
    <property type="evidence" value="ECO:0007669"/>
    <property type="project" value="InterPro"/>
</dbReference>
<dbReference type="CDD" id="cd10234">
    <property type="entry name" value="ASKHA_NBD_HSP70_DnaK-like"/>
    <property type="match status" value="1"/>
</dbReference>
<dbReference type="FunFam" id="2.60.34.10:FF:000014">
    <property type="entry name" value="Chaperone protein DnaK HSP70"/>
    <property type="match status" value="1"/>
</dbReference>
<dbReference type="FunFam" id="3.30.30.30:FF:000005">
    <property type="entry name" value="Heat shock protein ssb1"/>
    <property type="match status" value="1"/>
</dbReference>
<dbReference type="FunFam" id="1.20.1270.10:FF:000001">
    <property type="entry name" value="Molecular chaperone DnaK"/>
    <property type="match status" value="1"/>
</dbReference>
<dbReference type="FunFam" id="3.30.420.40:FF:000004">
    <property type="entry name" value="Molecular chaperone DnaK"/>
    <property type="match status" value="1"/>
</dbReference>
<dbReference type="FunFam" id="3.90.640.10:FF:000003">
    <property type="entry name" value="Molecular chaperone DnaK"/>
    <property type="match status" value="1"/>
</dbReference>
<dbReference type="Gene3D" id="1.20.1270.10">
    <property type="match status" value="1"/>
</dbReference>
<dbReference type="Gene3D" id="3.30.420.40">
    <property type="match status" value="2"/>
</dbReference>
<dbReference type="Gene3D" id="3.90.640.10">
    <property type="entry name" value="Actin, Chain A, domain 4"/>
    <property type="match status" value="1"/>
</dbReference>
<dbReference type="Gene3D" id="2.60.34.10">
    <property type="entry name" value="Substrate Binding Domain Of DNAk, Chain A, domain 1"/>
    <property type="match status" value="1"/>
</dbReference>
<dbReference type="HAMAP" id="MF_00332">
    <property type="entry name" value="DnaK"/>
    <property type="match status" value="1"/>
</dbReference>
<dbReference type="InterPro" id="IPR043129">
    <property type="entry name" value="ATPase_NBD"/>
</dbReference>
<dbReference type="InterPro" id="IPR012725">
    <property type="entry name" value="Chaperone_DnaK"/>
</dbReference>
<dbReference type="InterPro" id="IPR018181">
    <property type="entry name" value="Heat_shock_70_CS"/>
</dbReference>
<dbReference type="InterPro" id="IPR029048">
    <property type="entry name" value="HSP70_C_sf"/>
</dbReference>
<dbReference type="InterPro" id="IPR029047">
    <property type="entry name" value="HSP70_peptide-bd_sf"/>
</dbReference>
<dbReference type="InterPro" id="IPR013126">
    <property type="entry name" value="Hsp_70_fam"/>
</dbReference>
<dbReference type="NCBIfam" id="NF001413">
    <property type="entry name" value="PRK00290.1"/>
    <property type="match status" value="1"/>
</dbReference>
<dbReference type="NCBIfam" id="NF003520">
    <property type="entry name" value="PRK05183.1"/>
    <property type="match status" value="1"/>
</dbReference>
<dbReference type="NCBIfam" id="TIGR02350">
    <property type="entry name" value="prok_dnaK"/>
    <property type="match status" value="1"/>
</dbReference>
<dbReference type="PANTHER" id="PTHR19375">
    <property type="entry name" value="HEAT SHOCK PROTEIN 70KDA"/>
    <property type="match status" value="1"/>
</dbReference>
<dbReference type="Pfam" id="PF00012">
    <property type="entry name" value="HSP70"/>
    <property type="match status" value="1"/>
</dbReference>
<dbReference type="PRINTS" id="PR00301">
    <property type="entry name" value="HEATSHOCK70"/>
</dbReference>
<dbReference type="SUPFAM" id="SSF53067">
    <property type="entry name" value="Actin-like ATPase domain"/>
    <property type="match status" value="2"/>
</dbReference>
<dbReference type="SUPFAM" id="SSF100934">
    <property type="entry name" value="Heat shock protein 70kD (HSP70), C-terminal subdomain"/>
    <property type="match status" value="1"/>
</dbReference>
<dbReference type="SUPFAM" id="SSF100920">
    <property type="entry name" value="Heat shock protein 70kD (HSP70), peptide-binding domain"/>
    <property type="match status" value="1"/>
</dbReference>
<dbReference type="PROSITE" id="PS00297">
    <property type="entry name" value="HSP70_1"/>
    <property type="match status" value="1"/>
</dbReference>
<dbReference type="PROSITE" id="PS00329">
    <property type="entry name" value="HSP70_2"/>
    <property type="match status" value="1"/>
</dbReference>
<dbReference type="PROSITE" id="PS01036">
    <property type="entry name" value="HSP70_3"/>
    <property type="match status" value="1"/>
</dbReference>
<comment type="function">
    <text evidence="1">Acts as a chaperone.</text>
</comment>
<comment type="induction">
    <text evidence="1">By stress conditions e.g. heat shock.</text>
</comment>
<comment type="similarity">
    <text evidence="1">Belongs to the heat shock protein 70 family.</text>
</comment>